<proteinExistence type="inferred from homology"/>
<comment type="function">
    <text evidence="1">ATP-binding RNA helicase involved in the biogenesis of 60S ribosomal subunits. Required for the normal formation of 18S rRNA through the processing of pre-rRNAs at sites A0, A1 and A2, and the normal formation of 25S and 5.8S rRNAs through the processing of pre-rRNAs at sites C1 and C2 (By similarity).</text>
</comment>
<comment type="subcellular location">
    <subcellularLocation>
        <location evidence="1">Nucleus</location>
        <location evidence="1">Nucleolus</location>
    </subcellularLocation>
</comment>
<comment type="domain">
    <text>The Q motif is unique to and characteristic of the DEAD box family of RNA helicases and controls ATP binding and hydrolysis.</text>
</comment>
<comment type="similarity">
    <text evidence="6">Belongs to the DEAD box helicase family. DDX55/SPB4 subfamily.</text>
</comment>
<evidence type="ECO:0000250" key="1"/>
<evidence type="ECO:0000255" key="2"/>
<evidence type="ECO:0000255" key="3">
    <source>
        <dbReference type="PROSITE-ProRule" id="PRU00541"/>
    </source>
</evidence>
<evidence type="ECO:0000255" key="4">
    <source>
        <dbReference type="PROSITE-ProRule" id="PRU00542"/>
    </source>
</evidence>
<evidence type="ECO:0000256" key="5">
    <source>
        <dbReference type="SAM" id="MobiDB-lite"/>
    </source>
</evidence>
<evidence type="ECO:0000305" key="6"/>
<sequence>MSTDWKDLPVAPWLIDTMEQFGFTDMTPVQASVIPMFAGNKDVIVEAVTGSGKTIAFLVPLIQRMLNLLKEGPAVSGRVYSVVVSPTRELARQTYEVLQSILEMGCPEADASDKITLEKKKKGKAAPTMPKKIRGQLIMGGDLPSHMDLKNFLRDKPQIIVATPGRLLELLRAPQIKTSAFDSLVLDEADRLLDLGFGRDITSIINILPKQRRTGLFSATITDAIQNLVKIGLRNPVKIVVKVGGKKEQKTPLSLGLSYVVLEPREKLAYALNLLSIYPYRKAIVYLPTCAAVTYYQQMFSHLNEGREEPYEIYGLHGKLPSSTRIKILNKYQKTGAQAILMTTDIAARGLDIPEVDLVVQLDPPSDADTFQHRCGRAGRAGRQGQAIVLLHKGREEEYVDLMRVRKVKLRPYTGPGSELEGEKLDQEATELYTKLRKWVLEDRQRHDQALLSFVSFVRFYSKHVAQSIFRIQSLDLPGLAASYGLLRLPKMPELRTKDNERPENTWLGEVIDFDTYSYKNPAKEEARLKELEAHKEAMKNKVKIHKTKNDVQKANRAWSSTLQKKEEKSERHQKKQTRINEKIKRDFEEAKDLKQEESKEVVNDWKDMVKKSKKRKVDLPTFDDL</sequence>
<protein>
    <recommendedName>
        <fullName>ATP-dependent rRNA helicase SPB4</fullName>
        <ecNumber>3.6.4.-</ecNumber>
    </recommendedName>
</protein>
<organism>
    <name type="scientific">Yarrowia lipolytica (strain CLIB 122 / E 150)</name>
    <name type="common">Yeast</name>
    <name type="synonym">Candida lipolytica</name>
    <dbReference type="NCBI Taxonomy" id="284591"/>
    <lineage>
        <taxon>Eukaryota</taxon>
        <taxon>Fungi</taxon>
        <taxon>Dikarya</taxon>
        <taxon>Ascomycota</taxon>
        <taxon>Saccharomycotina</taxon>
        <taxon>Dipodascomycetes</taxon>
        <taxon>Dipodascales</taxon>
        <taxon>Dipodascales incertae sedis</taxon>
        <taxon>Yarrowia</taxon>
    </lineage>
</organism>
<dbReference type="EC" id="3.6.4.-"/>
<dbReference type="EMBL" id="CR382132">
    <property type="protein sequence ID" value="CAG78378.1"/>
    <property type="molecule type" value="Genomic_DNA"/>
</dbReference>
<dbReference type="RefSeq" id="XP_505569.1">
    <property type="nucleotide sequence ID" value="XM_505569.1"/>
</dbReference>
<dbReference type="SMR" id="Q6C193"/>
<dbReference type="FunCoup" id="Q6C193">
    <property type="interactions" value="1213"/>
</dbReference>
<dbReference type="STRING" id="284591.Q6C193"/>
<dbReference type="EnsemblFungi" id="CAG78378">
    <property type="protein sequence ID" value="CAG78378"/>
    <property type="gene ID" value="YALI0_F18238g"/>
</dbReference>
<dbReference type="KEGG" id="yli:2908671"/>
<dbReference type="VEuPathDB" id="FungiDB:YALI0_F18238g"/>
<dbReference type="HOGENOM" id="CLU_003041_26_4_1"/>
<dbReference type="InParanoid" id="Q6C193"/>
<dbReference type="OMA" id="AYKEHEC"/>
<dbReference type="OrthoDB" id="118720at4891"/>
<dbReference type="Proteomes" id="UP000001300">
    <property type="component" value="Chromosome F"/>
</dbReference>
<dbReference type="GO" id="GO:0005730">
    <property type="term" value="C:nucleolus"/>
    <property type="evidence" value="ECO:0000318"/>
    <property type="project" value="GO_Central"/>
</dbReference>
<dbReference type="GO" id="GO:0005524">
    <property type="term" value="F:ATP binding"/>
    <property type="evidence" value="ECO:0007669"/>
    <property type="project" value="UniProtKB-KW"/>
</dbReference>
<dbReference type="GO" id="GO:0016787">
    <property type="term" value="F:hydrolase activity"/>
    <property type="evidence" value="ECO:0007669"/>
    <property type="project" value="UniProtKB-KW"/>
</dbReference>
<dbReference type="GO" id="GO:0003723">
    <property type="term" value="F:RNA binding"/>
    <property type="evidence" value="ECO:0007669"/>
    <property type="project" value="UniProtKB-KW"/>
</dbReference>
<dbReference type="GO" id="GO:0003724">
    <property type="term" value="F:RNA helicase activity"/>
    <property type="evidence" value="ECO:0007669"/>
    <property type="project" value="InterPro"/>
</dbReference>
<dbReference type="GO" id="GO:0006364">
    <property type="term" value="P:rRNA processing"/>
    <property type="evidence" value="ECO:0007669"/>
    <property type="project" value="UniProtKB-KW"/>
</dbReference>
<dbReference type="CDD" id="cd17960">
    <property type="entry name" value="DEADc_DDX55"/>
    <property type="match status" value="1"/>
</dbReference>
<dbReference type="CDD" id="cd18787">
    <property type="entry name" value="SF2_C_DEAD"/>
    <property type="match status" value="1"/>
</dbReference>
<dbReference type="Gene3D" id="3.40.50.300">
    <property type="entry name" value="P-loop containing nucleotide triphosphate hydrolases"/>
    <property type="match status" value="2"/>
</dbReference>
<dbReference type="InterPro" id="IPR056330">
    <property type="entry name" value="CTT_SPB4"/>
</dbReference>
<dbReference type="InterPro" id="IPR011545">
    <property type="entry name" value="DEAD/DEAH_box_helicase_dom"/>
</dbReference>
<dbReference type="InterPro" id="IPR014001">
    <property type="entry name" value="Helicase_ATP-bd"/>
</dbReference>
<dbReference type="InterPro" id="IPR001650">
    <property type="entry name" value="Helicase_C-like"/>
</dbReference>
<dbReference type="InterPro" id="IPR027417">
    <property type="entry name" value="P-loop_NTPase"/>
</dbReference>
<dbReference type="InterPro" id="IPR000629">
    <property type="entry name" value="RNA-helicase_DEAD-box_CS"/>
</dbReference>
<dbReference type="InterPro" id="IPR014014">
    <property type="entry name" value="RNA_helicase_DEAD_Q_motif"/>
</dbReference>
<dbReference type="InterPro" id="IPR025313">
    <property type="entry name" value="SPB4-like_CTE"/>
</dbReference>
<dbReference type="PANTHER" id="PTHR24031">
    <property type="entry name" value="RNA HELICASE"/>
    <property type="match status" value="1"/>
</dbReference>
<dbReference type="Pfam" id="PF13959">
    <property type="entry name" value="CTE_SPB4"/>
    <property type="match status" value="1"/>
</dbReference>
<dbReference type="Pfam" id="PF23681">
    <property type="entry name" value="CTT_SPB4"/>
    <property type="match status" value="1"/>
</dbReference>
<dbReference type="Pfam" id="PF00270">
    <property type="entry name" value="DEAD"/>
    <property type="match status" value="1"/>
</dbReference>
<dbReference type="Pfam" id="PF00271">
    <property type="entry name" value="Helicase_C"/>
    <property type="match status" value="1"/>
</dbReference>
<dbReference type="SMART" id="SM00487">
    <property type="entry name" value="DEXDc"/>
    <property type="match status" value="1"/>
</dbReference>
<dbReference type="SMART" id="SM01178">
    <property type="entry name" value="DUF4217"/>
    <property type="match status" value="1"/>
</dbReference>
<dbReference type="SMART" id="SM00490">
    <property type="entry name" value="HELICc"/>
    <property type="match status" value="1"/>
</dbReference>
<dbReference type="SUPFAM" id="SSF52540">
    <property type="entry name" value="P-loop containing nucleoside triphosphate hydrolases"/>
    <property type="match status" value="2"/>
</dbReference>
<dbReference type="PROSITE" id="PS00039">
    <property type="entry name" value="DEAD_ATP_HELICASE"/>
    <property type="match status" value="1"/>
</dbReference>
<dbReference type="PROSITE" id="PS51192">
    <property type="entry name" value="HELICASE_ATP_BIND_1"/>
    <property type="match status" value="1"/>
</dbReference>
<dbReference type="PROSITE" id="PS51194">
    <property type="entry name" value="HELICASE_CTER"/>
    <property type="match status" value="1"/>
</dbReference>
<dbReference type="PROSITE" id="PS51195">
    <property type="entry name" value="Q_MOTIF"/>
    <property type="match status" value="1"/>
</dbReference>
<feature type="chain" id="PRO_0000232334" description="ATP-dependent rRNA helicase SPB4">
    <location>
        <begin position="1"/>
        <end position="626"/>
    </location>
</feature>
<feature type="domain" description="Helicase ATP-binding" evidence="3">
    <location>
        <begin position="34"/>
        <end position="239"/>
    </location>
</feature>
<feature type="domain" description="Helicase C-terminal" evidence="4">
    <location>
        <begin position="273"/>
        <end position="437"/>
    </location>
</feature>
<feature type="region of interest" description="Disordered" evidence="5">
    <location>
        <begin position="549"/>
        <end position="626"/>
    </location>
</feature>
<feature type="coiled-coil region" evidence="2">
    <location>
        <begin position="523"/>
        <end position="604"/>
    </location>
</feature>
<feature type="short sequence motif" description="Q motif">
    <location>
        <begin position="3"/>
        <end position="31"/>
    </location>
</feature>
<feature type="short sequence motif" description="DEAD box">
    <location>
        <begin position="187"/>
        <end position="190"/>
    </location>
</feature>
<feature type="compositionally biased region" description="Basic and acidic residues" evidence="5">
    <location>
        <begin position="579"/>
        <end position="611"/>
    </location>
</feature>
<feature type="binding site" evidence="3">
    <location>
        <begin position="47"/>
        <end position="54"/>
    </location>
    <ligand>
        <name>ATP</name>
        <dbReference type="ChEBI" id="CHEBI:30616"/>
    </ligand>
</feature>
<accession>Q6C193</accession>
<keyword id="KW-0067">ATP-binding</keyword>
<keyword id="KW-0175">Coiled coil</keyword>
<keyword id="KW-0347">Helicase</keyword>
<keyword id="KW-0378">Hydrolase</keyword>
<keyword id="KW-0547">Nucleotide-binding</keyword>
<keyword id="KW-0539">Nucleus</keyword>
<keyword id="KW-1185">Reference proteome</keyword>
<keyword id="KW-0690">Ribosome biogenesis</keyword>
<keyword id="KW-0694">RNA-binding</keyword>
<keyword id="KW-0698">rRNA processing</keyword>
<name>SPB4_YARLI</name>
<gene>
    <name type="primary">SPB4</name>
    <name type="ordered locus">YALI0F18238g</name>
</gene>
<reference key="1">
    <citation type="journal article" date="2004" name="Nature">
        <title>Genome evolution in yeasts.</title>
        <authorList>
            <person name="Dujon B."/>
            <person name="Sherman D."/>
            <person name="Fischer G."/>
            <person name="Durrens P."/>
            <person name="Casaregola S."/>
            <person name="Lafontaine I."/>
            <person name="de Montigny J."/>
            <person name="Marck C."/>
            <person name="Neuveglise C."/>
            <person name="Talla E."/>
            <person name="Goffard N."/>
            <person name="Frangeul L."/>
            <person name="Aigle M."/>
            <person name="Anthouard V."/>
            <person name="Babour A."/>
            <person name="Barbe V."/>
            <person name="Barnay S."/>
            <person name="Blanchin S."/>
            <person name="Beckerich J.-M."/>
            <person name="Beyne E."/>
            <person name="Bleykasten C."/>
            <person name="Boisrame A."/>
            <person name="Boyer J."/>
            <person name="Cattolico L."/>
            <person name="Confanioleri F."/>
            <person name="de Daruvar A."/>
            <person name="Despons L."/>
            <person name="Fabre E."/>
            <person name="Fairhead C."/>
            <person name="Ferry-Dumazet H."/>
            <person name="Groppi A."/>
            <person name="Hantraye F."/>
            <person name="Hennequin C."/>
            <person name="Jauniaux N."/>
            <person name="Joyet P."/>
            <person name="Kachouri R."/>
            <person name="Kerrest A."/>
            <person name="Koszul R."/>
            <person name="Lemaire M."/>
            <person name="Lesur I."/>
            <person name="Ma L."/>
            <person name="Muller H."/>
            <person name="Nicaud J.-M."/>
            <person name="Nikolski M."/>
            <person name="Oztas S."/>
            <person name="Ozier-Kalogeropoulos O."/>
            <person name="Pellenz S."/>
            <person name="Potier S."/>
            <person name="Richard G.-F."/>
            <person name="Straub M.-L."/>
            <person name="Suleau A."/>
            <person name="Swennen D."/>
            <person name="Tekaia F."/>
            <person name="Wesolowski-Louvel M."/>
            <person name="Westhof E."/>
            <person name="Wirth B."/>
            <person name="Zeniou-Meyer M."/>
            <person name="Zivanovic Y."/>
            <person name="Bolotin-Fukuhara M."/>
            <person name="Thierry A."/>
            <person name="Bouchier C."/>
            <person name="Caudron B."/>
            <person name="Scarpelli C."/>
            <person name="Gaillardin C."/>
            <person name="Weissenbach J."/>
            <person name="Wincker P."/>
            <person name="Souciet J.-L."/>
        </authorList>
    </citation>
    <scope>NUCLEOTIDE SEQUENCE [LARGE SCALE GENOMIC DNA]</scope>
    <source>
        <strain>CLIB 122 / E 150</strain>
    </source>
</reference>